<reference key="1">
    <citation type="journal article" date="2006" name="PLoS Genet.">
        <title>Comparative genomics of emerging human ehrlichiosis agents.</title>
        <authorList>
            <person name="Dunning Hotopp J.C."/>
            <person name="Lin M."/>
            <person name="Madupu R."/>
            <person name="Crabtree J."/>
            <person name="Angiuoli S.V."/>
            <person name="Eisen J.A."/>
            <person name="Seshadri R."/>
            <person name="Ren Q."/>
            <person name="Wu M."/>
            <person name="Utterback T.R."/>
            <person name="Smith S."/>
            <person name="Lewis M."/>
            <person name="Khouri H."/>
            <person name="Zhang C."/>
            <person name="Niu H."/>
            <person name="Lin Q."/>
            <person name="Ohashi N."/>
            <person name="Zhi N."/>
            <person name="Nelson W.C."/>
            <person name="Brinkac L.M."/>
            <person name="Dodson R.J."/>
            <person name="Rosovitz M.J."/>
            <person name="Sundaram J.P."/>
            <person name="Daugherty S.C."/>
            <person name="Davidsen T."/>
            <person name="Durkin A.S."/>
            <person name="Gwinn M.L."/>
            <person name="Haft D.H."/>
            <person name="Selengut J.D."/>
            <person name="Sullivan S.A."/>
            <person name="Zafar N."/>
            <person name="Zhou L."/>
            <person name="Benahmed F."/>
            <person name="Forberger H."/>
            <person name="Halpin R."/>
            <person name="Mulligan S."/>
            <person name="Robinson J."/>
            <person name="White O."/>
            <person name="Rikihisa Y."/>
            <person name="Tettelin H."/>
        </authorList>
    </citation>
    <scope>NUCLEOTIDE SEQUENCE [LARGE SCALE GENOMIC DNA]</scope>
    <source>
        <strain>ATCC CRL-10679 / Arkansas</strain>
    </source>
</reference>
<keyword id="KW-0067">ATP-binding</keyword>
<keyword id="KW-0460">Magnesium</keyword>
<keyword id="KW-0547">Nucleotide-binding</keyword>
<keyword id="KW-1185">Reference proteome</keyword>
<keyword id="KW-0808">Transferase</keyword>
<keyword id="KW-0819">tRNA processing</keyword>
<organism>
    <name type="scientific">Ehrlichia chaffeensis (strain ATCC CRL-10679 / Arkansas)</name>
    <dbReference type="NCBI Taxonomy" id="205920"/>
    <lineage>
        <taxon>Bacteria</taxon>
        <taxon>Pseudomonadati</taxon>
        <taxon>Pseudomonadota</taxon>
        <taxon>Alphaproteobacteria</taxon>
        <taxon>Rickettsiales</taxon>
        <taxon>Anaplasmataceae</taxon>
        <taxon>Ehrlichia</taxon>
    </lineage>
</organism>
<sequence length="303" mass="35101">MNNILIITGPTASGKSKISMKIAQDNNGIIVNCDSKQIYREIPIITDQPNLNDTSVEHKLYGYVSVTQQYSVGLWIEDLKDEISSIIQQKKFPVITGGSGMYINSLIYGLSQIPKIEDSVRNETRRLFKTLGKKEFYALLIDKDPIAKCLHKNNSHQLLRAYEVIEQTGISIFVWKENAPREPIFKNFKLCILMPPRSEIYKKINERFINMINTSVIEEIENLLSLNIPAHFPAMKAHGVPEIIQYLQNKISIDQAIEIAQKNTRNYAKRQYTWFKHQFRNALFYESQDQLLESIKNSYVYYN</sequence>
<accession>Q2GGN4</accession>
<protein>
    <recommendedName>
        <fullName evidence="1">tRNA dimethylallyltransferase</fullName>
        <ecNumber evidence="1">2.5.1.75</ecNumber>
    </recommendedName>
    <alternativeName>
        <fullName evidence="1">Dimethylallyl diphosphate:tRNA dimethylallyltransferase</fullName>
        <shortName evidence="1">DMAPP:tRNA dimethylallyltransferase</shortName>
        <shortName evidence="1">DMATase</shortName>
    </alternativeName>
    <alternativeName>
        <fullName evidence="1">Isopentenyl-diphosphate:tRNA isopentenyltransferase</fullName>
        <shortName evidence="1">IPP transferase</shortName>
        <shortName evidence="1">IPPT</shortName>
        <shortName evidence="1">IPTase</shortName>
    </alternativeName>
</protein>
<name>MIAA_EHRCR</name>
<gene>
    <name evidence="1" type="primary">miaA</name>
    <name type="ordered locus">ECH_0588</name>
</gene>
<proteinExistence type="inferred from homology"/>
<evidence type="ECO:0000255" key="1">
    <source>
        <dbReference type="HAMAP-Rule" id="MF_00185"/>
    </source>
</evidence>
<dbReference type="EC" id="2.5.1.75" evidence="1"/>
<dbReference type="EMBL" id="CP000236">
    <property type="protein sequence ID" value="ABD45295.1"/>
    <property type="molecule type" value="Genomic_DNA"/>
</dbReference>
<dbReference type="RefSeq" id="WP_006011101.1">
    <property type="nucleotide sequence ID" value="NC_007799.1"/>
</dbReference>
<dbReference type="SMR" id="Q2GGN4"/>
<dbReference type="STRING" id="205920.ECH_0588"/>
<dbReference type="KEGG" id="ech:ECH_0588"/>
<dbReference type="eggNOG" id="COG0324">
    <property type="taxonomic scope" value="Bacteria"/>
</dbReference>
<dbReference type="HOGENOM" id="CLU_032616_0_1_5"/>
<dbReference type="OrthoDB" id="9776390at2"/>
<dbReference type="Proteomes" id="UP000008320">
    <property type="component" value="Chromosome"/>
</dbReference>
<dbReference type="GO" id="GO:0005524">
    <property type="term" value="F:ATP binding"/>
    <property type="evidence" value="ECO:0007669"/>
    <property type="project" value="UniProtKB-UniRule"/>
</dbReference>
<dbReference type="GO" id="GO:0052381">
    <property type="term" value="F:tRNA dimethylallyltransferase activity"/>
    <property type="evidence" value="ECO:0007669"/>
    <property type="project" value="UniProtKB-UniRule"/>
</dbReference>
<dbReference type="GO" id="GO:0006400">
    <property type="term" value="P:tRNA modification"/>
    <property type="evidence" value="ECO:0007669"/>
    <property type="project" value="TreeGrafter"/>
</dbReference>
<dbReference type="Gene3D" id="1.10.20.140">
    <property type="match status" value="1"/>
</dbReference>
<dbReference type="Gene3D" id="3.40.50.300">
    <property type="entry name" value="P-loop containing nucleotide triphosphate hydrolases"/>
    <property type="match status" value="1"/>
</dbReference>
<dbReference type="HAMAP" id="MF_00185">
    <property type="entry name" value="IPP_trans"/>
    <property type="match status" value="1"/>
</dbReference>
<dbReference type="InterPro" id="IPR039657">
    <property type="entry name" value="Dimethylallyltransferase"/>
</dbReference>
<dbReference type="InterPro" id="IPR018022">
    <property type="entry name" value="IPT"/>
</dbReference>
<dbReference type="InterPro" id="IPR027417">
    <property type="entry name" value="P-loop_NTPase"/>
</dbReference>
<dbReference type="NCBIfam" id="TIGR00174">
    <property type="entry name" value="miaA"/>
    <property type="match status" value="1"/>
</dbReference>
<dbReference type="PANTHER" id="PTHR11088">
    <property type="entry name" value="TRNA DIMETHYLALLYLTRANSFERASE"/>
    <property type="match status" value="1"/>
</dbReference>
<dbReference type="PANTHER" id="PTHR11088:SF60">
    <property type="entry name" value="TRNA DIMETHYLALLYLTRANSFERASE"/>
    <property type="match status" value="1"/>
</dbReference>
<dbReference type="Pfam" id="PF01715">
    <property type="entry name" value="IPPT"/>
    <property type="match status" value="1"/>
</dbReference>
<dbReference type="SUPFAM" id="SSF52540">
    <property type="entry name" value="P-loop containing nucleoside triphosphate hydrolases"/>
    <property type="match status" value="1"/>
</dbReference>
<comment type="function">
    <text evidence="1">Catalyzes the transfer of a dimethylallyl group onto the adenine at position 37 in tRNAs that read codons beginning with uridine, leading to the formation of N6-(dimethylallyl)adenosine (i(6)A).</text>
</comment>
<comment type="catalytic activity">
    <reaction evidence="1">
        <text>adenosine(37) in tRNA + dimethylallyl diphosphate = N(6)-dimethylallyladenosine(37) in tRNA + diphosphate</text>
        <dbReference type="Rhea" id="RHEA:26482"/>
        <dbReference type="Rhea" id="RHEA-COMP:10162"/>
        <dbReference type="Rhea" id="RHEA-COMP:10375"/>
        <dbReference type="ChEBI" id="CHEBI:33019"/>
        <dbReference type="ChEBI" id="CHEBI:57623"/>
        <dbReference type="ChEBI" id="CHEBI:74411"/>
        <dbReference type="ChEBI" id="CHEBI:74415"/>
        <dbReference type="EC" id="2.5.1.75"/>
    </reaction>
</comment>
<comment type="cofactor">
    <cofactor evidence="1">
        <name>Mg(2+)</name>
        <dbReference type="ChEBI" id="CHEBI:18420"/>
    </cofactor>
</comment>
<comment type="subunit">
    <text evidence="1">Monomer.</text>
</comment>
<comment type="similarity">
    <text evidence="1">Belongs to the IPP transferase family.</text>
</comment>
<feature type="chain" id="PRO_0000377152" description="tRNA dimethylallyltransferase">
    <location>
        <begin position="1"/>
        <end position="303"/>
    </location>
</feature>
<feature type="region of interest" description="Interaction with substrate tRNA" evidence="1">
    <location>
        <begin position="34"/>
        <end position="37"/>
    </location>
</feature>
<feature type="binding site" evidence="1">
    <location>
        <begin position="9"/>
        <end position="16"/>
    </location>
    <ligand>
        <name>ATP</name>
        <dbReference type="ChEBI" id="CHEBI:30616"/>
    </ligand>
</feature>
<feature type="binding site" evidence="1">
    <location>
        <begin position="11"/>
        <end position="16"/>
    </location>
    <ligand>
        <name>substrate</name>
    </ligand>
</feature>
<feature type="site" description="Interaction with substrate tRNA" evidence="1">
    <location>
        <position position="99"/>
    </location>
</feature>
<feature type="site" description="Interaction with substrate tRNA" evidence="1">
    <location>
        <position position="121"/>
    </location>
</feature>